<organism>
    <name type="scientific">Thermus thermophilus (strain ATCC 27634 / DSM 579 / HB8)</name>
    <dbReference type="NCBI Taxonomy" id="300852"/>
    <lineage>
        <taxon>Bacteria</taxon>
        <taxon>Thermotogati</taxon>
        <taxon>Deinococcota</taxon>
        <taxon>Deinococci</taxon>
        <taxon>Thermales</taxon>
        <taxon>Thermaceae</taxon>
        <taxon>Thermus</taxon>
    </lineage>
</organism>
<proteinExistence type="evidence at protein level"/>
<keyword id="KW-0002">3D-structure</keyword>
<keyword id="KW-0067">ATP-binding</keyword>
<keyword id="KW-0173">Coenzyme A biosynthesis</keyword>
<keyword id="KW-0963">Cytoplasm</keyword>
<keyword id="KW-0460">Magnesium</keyword>
<keyword id="KW-0547">Nucleotide-binding</keyword>
<keyword id="KW-0548">Nucleotidyltransferase</keyword>
<keyword id="KW-1185">Reference proteome</keyword>
<keyword id="KW-0808">Transferase</keyword>
<comment type="function">
    <text evidence="1">Reversibly transfers an adenylyl group from ATP to 4'-phosphopantetheine, yielding dephospho-CoA (dPCoA) and pyrophosphate.</text>
</comment>
<comment type="catalytic activity">
    <reaction evidence="1">
        <text>(R)-4'-phosphopantetheine + ATP + H(+) = 3'-dephospho-CoA + diphosphate</text>
        <dbReference type="Rhea" id="RHEA:19801"/>
        <dbReference type="ChEBI" id="CHEBI:15378"/>
        <dbReference type="ChEBI" id="CHEBI:30616"/>
        <dbReference type="ChEBI" id="CHEBI:33019"/>
        <dbReference type="ChEBI" id="CHEBI:57328"/>
        <dbReference type="ChEBI" id="CHEBI:61723"/>
        <dbReference type="EC" id="2.7.7.3"/>
    </reaction>
</comment>
<comment type="cofactor">
    <cofactor evidence="1">
        <name>Mg(2+)</name>
        <dbReference type="ChEBI" id="CHEBI:18420"/>
    </cofactor>
</comment>
<comment type="pathway">
    <text evidence="1">Cofactor biosynthesis; coenzyme A biosynthesis; CoA from (R)-pantothenate: step 4/5.</text>
</comment>
<comment type="subunit">
    <text evidence="1 2">Homohexamer. All subunits in the hexamer bind substrate. Is in equilibrium between two trimers and a hexamer, and the trimer may be a physiologically important form in T.thermophilus.</text>
</comment>
<comment type="subcellular location">
    <subcellularLocation>
        <location evidence="1">Cytoplasm</location>
    </subcellularLocation>
</comment>
<comment type="similarity">
    <text evidence="1">Belongs to the bacterial CoaD family.</text>
</comment>
<reference key="1">
    <citation type="submission" date="2004-11" db="EMBL/GenBank/DDBJ databases">
        <title>Complete genome sequence of Thermus thermophilus HB8.</title>
        <authorList>
            <person name="Masui R."/>
            <person name="Kurokawa K."/>
            <person name="Nakagawa N."/>
            <person name="Tokunaga F."/>
            <person name="Koyama Y."/>
            <person name="Shibata T."/>
            <person name="Oshima T."/>
            <person name="Yokoyama S."/>
            <person name="Yasunaga T."/>
            <person name="Kuramitsu S."/>
        </authorList>
    </citation>
    <scope>NUCLEOTIDE SEQUENCE [LARGE SCALE GENOMIC DNA]</scope>
    <source>
        <strain>ATCC 27634 / DSM 579 / HB8</strain>
    </source>
</reference>
<reference key="2">
    <citation type="journal article" date="2004" name="Acta Crystallogr. D">
        <title>Structure and implications for the thermal stability of phosphopantetheine adenylyltransferase from Thermus thermophilus.</title>
        <authorList>
            <person name="Takahashi H."/>
            <person name="Inagaki E."/>
            <person name="Fujimoto Y."/>
            <person name="Kuroishi C."/>
            <person name="Nodake Y."/>
            <person name="Nakamura Y."/>
            <person name="Arisaka F."/>
            <person name="Yutani K."/>
            <person name="Kuramitsu S."/>
            <person name="Yokoyama S."/>
            <person name="Yamamoto M."/>
            <person name="Miyano M."/>
            <person name="Tahirov T.H."/>
        </authorList>
    </citation>
    <scope>X-RAY CRYSTALLOGRAPHY (1.5 ANGSTROMS) IN COMPLEX WITH 4'-PHOSPHOPANTETHEINE</scope>
    <scope>SUBUNIT</scope>
    <source>
        <strain>ATCC 27634 / DSM 579 / HB8</strain>
    </source>
</reference>
<evidence type="ECO:0000255" key="1">
    <source>
        <dbReference type="HAMAP-Rule" id="MF_00151"/>
    </source>
</evidence>
<evidence type="ECO:0000269" key="2">
    <source>
    </source>
</evidence>
<evidence type="ECO:0000303" key="3">
    <source>
    </source>
</evidence>
<evidence type="ECO:0007744" key="4">
    <source>
        <dbReference type="PDB" id="1OD6"/>
    </source>
</evidence>
<evidence type="ECO:0007829" key="5">
    <source>
        <dbReference type="PDB" id="1OD6"/>
    </source>
</evidence>
<name>COAD_THET8</name>
<feature type="chain" id="PRO_1000011271" description="Phosphopantetheine adenylyltransferase">
    <location>
        <begin position="1"/>
        <end position="160"/>
    </location>
</feature>
<feature type="binding site" evidence="1">
    <location>
        <begin position="8"/>
        <end position="9"/>
    </location>
    <ligand>
        <name>ATP</name>
        <dbReference type="ChEBI" id="CHEBI:30616"/>
    </ligand>
</feature>
<feature type="binding site" description="in other chain" evidence="1 2 4">
    <location>
        <position position="8"/>
    </location>
    <ligand>
        <name>substrate</name>
        <note>ligand shared between two neighboring subunits</note>
    </ligand>
</feature>
<feature type="binding site" evidence="1">
    <location>
        <position position="16"/>
    </location>
    <ligand>
        <name>ATP</name>
        <dbReference type="ChEBI" id="CHEBI:30616"/>
    </ligand>
</feature>
<feature type="binding site" description="in other chain" evidence="1">
    <location>
        <position position="40"/>
    </location>
    <ligand>
        <name>substrate</name>
        <note>ligand shared between two neighboring subunits</note>
    </ligand>
</feature>
<feature type="binding site" description="in other chain" evidence="1 2 4">
    <location>
        <position position="74"/>
    </location>
    <ligand>
        <name>substrate</name>
        <note>ligand shared between two neighboring subunits</note>
    </ligand>
</feature>
<feature type="binding site" description="in other chain" evidence="1">
    <location>
        <position position="88"/>
    </location>
    <ligand>
        <name>substrate</name>
        <note>ligand shared between two neighboring subunits</note>
    </ligand>
</feature>
<feature type="binding site" evidence="1">
    <location>
        <begin position="89"/>
        <end position="91"/>
    </location>
    <ligand>
        <name>ATP</name>
        <dbReference type="ChEBI" id="CHEBI:30616"/>
    </ligand>
</feature>
<feature type="binding site" evidence="1">
    <location>
        <position position="99"/>
    </location>
    <ligand>
        <name>ATP</name>
        <dbReference type="ChEBI" id="CHEBI:30616"/>
    </ligand>
</feature>
<feature type="binding site" evidence="1">
    <location>
        <begin position="124"/>
        <end position="130"/>
    </location>
    <ligand>
        <name>ATP</name>
        <dbReference type="ChEBI" id="CHEBI:30616"/>
    </ligand>
</feature>
<feature type="binding site" evidence="2 4">
    <location>
        <position position="134"/>
    </location>
    <ligand>
        <name>substrate</name>
        <note>ligand shared between two neighboring subunits</note>
    </ligand>
</feature>
<feature type="site" description="Transition state stabilizer" evidence="1">
    <location>
        <position position="16"/>
    </location>
</feature>
<feature type="strand" evidence="5">
    <location>
        <begin position="2"/>
        <end position="7"/>
    </location>
</feature>
<feature type="helix" evidence="5">
    <location>
        <begin position="14"/>
        <end position="26"/>
    </location>
</feature>
<feature type="strand" evidence="5">
    <location>
        <begin position="27"/>
        <end position="35"/>
    </location>
</feature>
<feature type="helix" evidence="5">
    <location>
        <begin position="48"/>
        <end position="58"/>
    </location>
</feature>
<feature type="turn" evidence="5">
    <location>
        <begin position="59"/>
        <end position="61"/>
    </location>
</feature>
<feature type="strand" evidence="5">
    <location>
        <begin position="65"/>
        <end position="70"/>
    </location>
</feature>
<feature type="helix" evidence="5">
    <location>
        <begin position="74"/>
        <end position="80"/>
    </location>
</feature>
<feature type="strand" evidence="5">
    <location>
        <begin position="84"/>
        <end position="90"/>
    </location>
</feature>
<feature type="helix" evidence="5">
    <location>
        <begin position="96"/>
        <end position="109"/>
    </location>
</feature>
<feature type="turn" evidence="5">
    <location>
        <begin position="110"/>
        <end position="112"/>
    </location>
</feature>
<feature type="strand" evidence="5">
    <location>
        <begin position="114"/>
        <end position="119"/>
    </location>
</feature>
<feature type="helix" evidence="5">
    <location>
        <begin position="122"/>
        <end position="124"/>
    </location>
</feature>
<feature type="helix" evidence="5">
    <location>
        <begin position="129"/>
        <end position="137"/>
    </location>
</feature>
<feature type="turn" evidence="5">
    <location>
        <begin position="143"/>
        <end position="145"/>
    </location>
</feature>
<feature type="helix" evidence="5">
    <location>
        <begin position="148"/>
        <end position="157"/>
    </location>
</feature>
<sequence>MHVVYPGSFDPLTNGHLDVIQRASRLFEKVTVAVLENPSKRGQYLFSAEERLAIIREATAHLANVEAATFSGLLVDFVRRVGAQAIVKGLRAVSDYEYELQMAHLNRQLYPGLETLFILAATRYSFVSSTMVKEIARYGGDVSKLVPPATLRALKAKLGQ</sequence>
<protein>
    <recommendedName>
        <fullName evidence="1 3">Phosphopantetheine adenylyltransferase</fullName>
        <ecNumber evidence="1">2.7.7.3</ecNumber>
    </recommendedName>
    <alternativeName>
        <fullName evidence="1">Dephospho-CoA pyrophosphorylase</fullName>
    </alternativeName>
    <alternativeName>
        <fullName evidence="1">Pantetheine-phosphate adenylyltransferase</fullName>
        <shortName evidence="1 3">PPAT</shortName>
    </alternativeName>
</protein>
<dbReference type="EC" id="2.7.7.3" evidence="1"/>
<dbReference type="EMBL" id="AP008226">
    <property type="protein sequence ID" value="BAD70752.1"/>
    <property type="molecule type" value="Genomic_DNA"/>
</dbReference>
<dbReference type="RefSeq" id="WP_011173005.1">
    <property type="nucleotide sequence ID" value="NC_006461.1"/>
</dbReference>
<dbReference type="RefSeq" id="YP_144195.1">
    <property type="nucleotide sequence ID" value="NC_006461.1"/>
</dbReference>
<dbReference type="PDB" id="1OD6">
    <property type="method" value="X-ray"/>
    <property type="resolution" value="1.50 A"/>
    <property type="chains" value="A=1-160"/>
</dbReference>
<dbReference type="PDBsum" id="1OD6"/>
<dbReference type="SMR" id="Q5SJS9"/>
<dbReference type="EnsemblBacteria" id="BAD70752">
    <property type="protein sequence ID" value="BAD70752"/>
    <property type="gene ID" value="BAD70752"/>
</dbReference>
<dbReference type="GeneID" id="3169134"/>
<dbReference type="KEGG" id="ttj:TTHA0929"/>
<dbReference type="PATRIC" id="fig|300852.9.peg.912"/>
<dbReference type="eggNOG" id="COG0669">
    <property type="taxonomic scope" value="Bacteria"/>
</dbReference>
<dbReference type="HOGENOM" id="CLU_100149_0_1_0"/>
<dbReference type="PhylomeDB" id="Q5SJS9"/>
<dbReference type="UniPathway" id="UPA00241">
    <property type="reaction ID" value="UER00355"/>
</dbReference>
<dbReference type="EvolutionaryTrace" id="Q5SJS9"/>
<dbReference type="Proteomes" id="UP000000532">
    <property type="component" value="Chromosome"/>
</dbReference>
<dbReference type="GO" id="GO:0005737">
    <property type="term" value="C:cytoplasm"/>
    <property type="evidence" value="ECO:0007669"/>
    <property type="project" value="UniProtKB-SubCell"/>
</dbReference>
<dbReference type="GO" id="GO:0005524">
    <property type="term" value="F:ATP binding"/>
    <property type="evidence" value="ECO:0007669"/>
    <property type="project" value="UniProtKB-KW"/>
</dbReference>
<dbReference type="GO" id="GO:0004595">
    <property type="term" value="F:pantetheine-phosphate adenylyltransferase activity"/>
    <property type="evidence" value="ECO:0007669"/>
    <property type="project" value="UniProtKB-UniRule"/>
</dbReference>
<dbReference type="GO" id="GO:0015937">
    <property type="term" value="P:coenzyme A biosynthetic process"/>
    <property type="evidence" value="ECO:0007669"/>
    <property type="project" value="UniProtKB-UniRule"/>
</dbReference>
<dbReference type="CDD" id="cd02163">
    <property type="entry name" value="PPAT"/>
    <property type="match status" value="1"/>
</dbReference>
<dbReference type="Gene3D" id="3.40.50.620">
    <property type="entry name" value="HUPs"/>
    <property type="match status" value="1"/>
</dbReference>
<dbReference type="HAMAP" id="MF_00151">
    <property type="entry name" value="PPAT_bact"/>
    <property type="match status" value="1"/>
</dbReference>
<dbReference type="InterPro" id="IPR004821">
    <property type="entry name" value="Cyt_trans-like"/>
</dbReference>
<dbReference type="InterPro" id="IPR001980">
    <property type="entry name" value="PPAT"/>
</dbReference>
<dbReference type="InterPro" id="IPR014729">
    <property type="entry name" value="Rossmann-like_a/b/a_fold"/>
</dbReference>
<dbReference type="NCBIfam" id="TIGR01510">
    <property type="entry name" value="coaD_prev_kdtB"/>
    <property type="match status" value="1"/>
</dbReference>
<dbReference type="NCBIfam" id="TIGR00125">
    <property type="entry name" value="cyt_tran_rel"/>
    <property type="match status" value="1"/>
</dbReference>
<dbReference type="PANTHER" id="PTHR21342">
    <property type="entry name" value="PHOSPHOPANTETHEINE ADENYLYLTRANSFERASE"/>
    <property type="match status" value="1"/>
</dbReference>
<dbReference type="PANTHER" id="PTHR21342:SF1">
    <property type="entry name" value="PHOSPHOPANTETHEINE ADENYLYLTRANSFERASE"/>
    <property type="match status" value="1"/>
</dbReference>
<dbReference type="Pfam" id="PF01467">
    <property type="entry name" value="CTP_transf_like"/>
    <property type="match status" value="1"/>
</dbReference>
<dbReference type="PRINTS" id="PR01020">
    <property type="entry name" value="LPSBIOSNTHSS"/>
</dbReference>
<dbReference type="SUPFAM" id="SSF52374">
    <property type="entry name" value="Nucleotidylyl transferase"/>
    <property type="match status" value="1"/>
</dbReference>
<accession>Q5SJS9</accession>
<accession>Q7SIA7</accession>
<gene>
    <name evidence="1" type="primary">coaD</name>
    <name type="ordered locus">TTHA0929</name>
</gene>